<name>GATA_PSEF5</name>
<accession>Q4KIA8</accession>
<protein>
    <recommendedName>
        <fullName evidence="1">Glutamyl-tRNA(Gln) amidotransferase subunit A</fullName>
        <shortName evidence="1">Glu-ADT subunit A</shortName>
        <ecNumber evidence="1">6.3.5.7</ecNumber>
    </recommendedName>
</protein>
<dbReference type="EC" id="6.3.5.7" evidence="1"/>
<dbReference type="EMBL" id="CP000076">
    <property type="protein sequence ID" value="AAY90181.1"/>
    <property type="molecule type" value="Genomic_DNA"/>
</dbReference>
<dbReference type="RefSeq" id="WP_011059249.1">
    <property type="nucleotide sequence ID" value="NC_004129.6"/>
</dbReference>
<dbReference type="SMR" id="Q4KIA8"/>
<dbReference type="STRING" id="220664.PFL_0894"/>
<dbReference type="KEGG" id="pfl:PFL_0894"/>
<dbReference type="PATRIC" id="fig|220664.5.peg.916"/>
<dbReference type="eggNOG" id="COG0154">
    <property type="taxonomic scope" value="Bacteria"/>
</dbReference>
<dbReference type="HOGENOM" id="CLU_009600_0_3_6"/>
<dbReference type="Proteomes" id="UP000008540">
    <property type="component" value="Chromosome"/>
</dbReference>
<dbReference type="GO" id="GO:0030956">
    <property type="term" value="C:glutamyl-tRNA(Gln) amidotransferase complex"/>
    <property type="evidence" value="ECO:0007669"/>
    <property type="project" value="InterPro"/>
</dbReference>
<dbReference type="GO" id="GO:0005524">
    <property type="term" value="F:ATP binding"/>
    <property type="evidence" value="ECO:0007669"/>
    <property type="project" value="UniProtKB-KW"/>
</dbReference>
<dbReference type="GO" id="GO:0050567">
    <property type="term" value="F:glutaminyl-tRNA synthase (glutamine-hydrolyzing) activity"/>
    <property type="evidence" value="ECO:0007669"/>
    <property type="project" value="UniProtKB-UniRule"/>
</dbReference>
<dbReference type="GO" id="GO:0006412">
    <property type="term" value="P:translation"/>
    <property type="evidence" value="ECO:0007669"/>
    <property type="project" value="UniProtKB-UniRule"/>
</dbReference>
<dbReference type="Gene3D" id="3.90.1300.10">
    <property type="entry name" value="Amidase signature (AS) domain"/>
    <property type="match status" value="1"/>
</dbReference>
<dbReference type="HAMAP" id="MF_00120">
    <property type="entry name" value="GatA"/>
    <property type="match status" value="1"/>
</dbReference>
<dbReference type="InterPro" id="IPR000120">
    <property type="entry name" value="Amidase"/>
</dbReference>
<dbReference type="InterPro" id="IPR020556">
    <property type="entry name" value="Amidase_CS"/>
</dbReference>
<dbReference type="InterPro" id="IPR023631">
    <property type="entry name" value="Amidase_dom"/>
</dbReference>
<dbReference type="InterPro" id="IPR036928">
    <property type="entry name" value="AS_sf"/>
</dbReference>
<dbReference type="InterPro" id="IPR004412">
    <property type="entry name" value="GatA"/>
</dbReference>
<dbReference type="NCBIfam" id="TIGR00132">
    <property type="entry name" value="gatA"/>
    <property type="match status" value="1"/>
</dbReference>
<dbReference type="PANTHER" id="PTHR11895:SF151">
    <property type="entry name" value="GLUTAMYL-TRNA(GLN) AMIDOTRANSFERASE SUBUNIT A"/>
    <property type="match status" value="1"/>
</dbReference>
<dbReference type="PANTHER" id="PTHR11895">
    <property type="entry name" value="TRANSAMIDASE"/>
    <property type="match status" value="1"/>
</dbReference>
<dbReference type="Pfam" id="PF01425">
    <property type="entry name" value="Amidase"/>
    <property type="match status" value="1"/>
</dbReference>
<dbReference type="SUPFAM" id="SSF75304">
    <property type="entry name" value="Amidase signature (AS) enzymes"/>
    <property type="match status" value="1"/>
</dbReference>
<dbReference type="PROSITE" id="PS00571">
    <property type="entry name" value="AMIDASES"/>
    <property type="match status" value="1"/>
</dbReference>
<evidence type="ECO:0000255" key="1">
    <source>
        <dbReference type="HAMAP-Rule" id="MF_00120"/>
    </source>
</evidence>
<reference key="1">
    <citation type="journal article" date="2005" name="Nat. Biotechnol.">
        <title>Complete genome sequence of the plant commensal Pseudomonas fluorescens Pf-5.</title>
        <authorList>
            <person name="Paulsen I.T."/>
            <person name="Press C.M."/>
            <person name="Ravel J."/>
            <person name="Kobayashi D.Y."/>
            <person name="Myers G.S.A."/>
            <person name="Mavrodi D.V."/>
            <person name="DeBoy R.T."/>
            <person name="Seshadri R."/>
            <person name="Ren Q."/>
            <person name="Madupu R."/>
            <person name="Dodson R.J."/>
            <person name="Durkin A.S."/>
            <person name="Brinkac L.M."/>
            <person name="Daugherty S.C."/>
            <person name="Sullivan S.A."/>
            <person name="Rosovitz M.J."/>
            <person name="Gwinn M.L."/>
            <person name="Zhou L."/>
            <person name="Schneider D.J."/>
            <person name="Cartinhour S.W."/>
            <person name="Nelson W.C."/>
            <person name="Weidman J."/>
            <person name="Watkins K."/>
            <person name="Tran K."/>
            <person name="Khouri H."/>
            <person name="Pierson E.A."/>
            <person name="Pierson L.S. III"/>
            <person name="Thomashow L.S."/>
            <person name="Loper J.E."/>
        </authorList>
    </citation>
    <scope>NUCLEOTIDE SEQUENCE [LARGE SCALE GENOMIC DNA]</scope>
    <source>
        <strain>ATCC BAA-477 / NRRL B-23932 / Pf-5</strain>
    </source>
</reference>
<gene>
    <name evidence="1" type="primary">gatA</name>
    <name type="ordered locus">PFL_0894</name>
</gene>
<sequence>MHHMTLAEIARGLADKKFSSVELTQTLLARIAQLDPQINSFISLTQDLALSQAKAADERRANGESGALLGAPIAHKDLFCTQGIRTSCGSKMLDNFKAPYDATVVAKLAAAGAVTLGKTNMDEFAMGSANESSWYGAVKNPWNLEHVPGGSSGGSAAAVAARLLPAATATDTGGSIRQPAAFTNLTGLKPTYGRVSRWGMIAYASSLDQGGPLARTAEDCAILLQGMAGFDPNDSTSIDEPVPDYSAGLTGSLQGLRIGVPKEYFSAGLDPRIAELIHNSIKELEKLGAVIKEISLPNMQHAIPAYYVIAPAEASSNLSRFDGVRFGYRCENPENLEDLYKRSRGEGFGSEVQRRIMVGAYALSAGYYDAYYLKAQKIRRLVKNDFMTAFNEVDIILGPTTPNPAWKLGAKSSDPVAAYLEDVYTITANLAGLPGLSMPAGFVDGLPVGVQLLAPYFQEGRLLNVAHQYQLNTDWHTRTPTGF</sequence>
<keyword id="KW-0067">ATP-binding</keyword>
<keyword id="KW-0436">Ligase</keyword>
<keyword id="KW-0547">Nucleotide-binding</keyword>
<keyword id="KW-0648">Protein biosynthesis</keyword>
<comment type="function">
    <text evidence="1">Allows the formation of correctly charged Gln-tRNA(Gln) through the transamidation of misacylated Glu-tRNA(Gln) in organisms which lack glutaminyl-tRNA synthetase. The reaction takes place in the presence of glutamine and ATP through an activated gamma-phospho-Glu-tRNA(Gln).</text>
</comment>
<comment type="catalytic activity">
    <reaction evidence="1">
        <text>L-glutamyl-tRNA(Gln) + L-glutamine + ATP + H2O = L-glutaminyl-tRNA(Gln) + L-glutamate + ADP + phosphate + H(+)</text>
        <dbReference type="Rhea" id="RHEA:17521"/>
        <dbReference type="Rhea" id="RHEA-COMP:9681"/>
        <dbReference type="Rhea" id="RHEA-COMP:9684"/>
        <dbReference type="ChEBI" id="CHEBI:15377"/>
        <dbReference type="ChEBI" id="CHEBI:15378"/>
        <dbReference type="ChEBI" id="CHEBI:29985"/>
        <dbReference type="ChEBI" id="CHEBI:30616"/>
        <dbReference type="ChEBI" id="CHEBI:43474"/>
        <dbReference type="ChEBI" id="CHEBI:58359"/>
        <dbReference type="ChEBI" id="CHEBI:78520"/>
        <dbReference type="ChEBI" id="CHEBI:78521"/>
        <dbReference type="ChEBI" id="CHEBI:456216"/>
        <dbReference type="EC" id="6.3.5.7"/>
    </reaction>
</comment>
<comment type="subunit">
    <text evidence="1">Heterotrimer of A, B and C subunits.</text>
</comment>
<comment type="similarity">
    <text evidence="1">Belongs to the amidase family. GatA subfamily.</text>
</comment>
<feature type="chain" id="PRO_0000241135" description="Glutamyl-tRNA(Gln) amidotransferase subunit A">
    <location>
        <begin position="1"/>
        <end position="483"/>
    </location>
</feature>
<feature type="active site" description="Charge relay system" evidence="1">
    <location>
        <position position="76"/>
    </location>
</feature>
<feature type="active site" description="Charge relay system" evidence="1">
    <location>
        <position position="151"/>
    </location>
</feature>
<feature type="active site" description="Acyl-ester intermediate" evidence="1">
    <location>
        <position position="175"/>
    </location>
</feature>
<proteinExistence type="inferred from homology"/>
<organism>
    <name type="scientific">Pseudomonas fluorescens (strain ATCC BAA-477 / NRRL B-23932 / Pf-5)</name>
    <dbReference type="NCBI Taxonomy" id="220664"/>
    <lineage>
        <taxon>Bacteria</taxon>
        <taxon>Pseudomonadati</taxon>
        <taxon>Pseudomonadota</taxon>
        <taxon>Gammaproteobacteria</taxon>
        <taxon>Pseudomonadales</taxon>
        <taxon>Pseudomonadaceae</taxon>
        <taxon>Pseudomonas</taxon>
    </lineage>
</organism>